<evidence type="ECO:0000255" key="1">
    <source>
        <dbReference type="HAMAP-Rule" id="MF_00365"/>
    </source>
</evidence>
<proteinExistence type="inferred from homology"/>
<protein>
    <recommendedName>
        <fullName evidence="1">DNA replication and repair protein RecF</fullName>
    </recommendedName>
</protein>
<accession>B7LK42</accession>
<sequence>MSLTRLLIRDFRNIETADLALSPGFNFLVGANGSGKTSVLEAIYTLGHGRAFRSLQIGRVIRHEQEAFILHGRLQGEERETAIGLTKDKQGDSKVRIDGTDGHKVAELAHLMPMQLITPEGFTLLNGGPKYRRAFLDWGCFHNEPGFFTAWSNLKRLLKQRNAALRQVTRYEQLRPWDKELIPLAEQISTWRAEYSAGIAADMADTCKQFLPEFTLTFSFQRGWEKETEYAEVLERNFERDRQLTYTAHGPHKADLRIRADGAPVEDTLSRGQLKLLMCALRLAQGEFLTRESGRRCLYLIDDFASELDDERRGLLASRLKATQSQVFVSAISAEHVIDMSDENSKMFTVEKGKITD</sequence>
<feature type="chain" id="PRO_1000121117" description="DNA replication and repair protein RecF">
    <location>
        <begin position="1"/>
        <end position="357"/>
    </location>
</feature>
<feature type="binding site" evidence="1">
    <location>
        <begin position="30"/>
        <end position="37"/>
    </location>
    <ligand>
        <name>ATP</name>
        <dbReference type="ChEBI" id="CHEBI:30616"/>
    </ligand>
</feature>
<organism>
    <name type="scientific">Escherichia fergusonii (strain ATCC 35469 / DSM 13698 / CCUG 18766 / IAM 14443 / JCM 21226 / LMG 7866 / NBRC 102419 / NCTC 12128 / CDC 0568-73)</name>
    <dbReference type="NCBI Taxonomy" id="585054"/>
    <lineage>
        <taxon>Bacteria</taxon>
        <taxon>Pseudomonadati</taxon>
        <taxon>Pseudomonadota</taxon>
        <taxon>Gammaproteobacteria</taxon>
        <taxon>Enterobacterales</taxon>
        <taxon>Enterobacteriaceae</taxon>
        <taxon>Escherichia</taxon>
    </lineage>
</organism>
<comment type="function">
    <text evidence="1">The RecF protein is involved in DNA metabolism; it is required for DNA replication and normal SOS inducibility. RecF binds preferentially to single-stranded, linear DNA. It also seems to bind ATP.</text>
</comment>
<comment type="subcellular location">
    <subcellularLocation>
        <location evidence="1">Cytoplasm</location>
    </subcellularLocation>
</comment>
<comment type="similarity">
    <text evidence="1">Belongs to the RecF family.</text>
</comment>
<dbReference type="EMBL" id="CU928158">
    <property type="protein sequence ID" value="CAQ91429.1"/>
    <property type="molecule type" value="Genomic_DNA"/>
</dbReference>
<dbReference type="RefSeq" id="WP_000060098.1">
    <property type="nucleotide sequence ID" value="NC_011740.1"/>
</dbReference>
<dbReference type="SMR" id="B7LK42"/>
<dbReference type="GeneID" id="75059589"/>
<dbReference type="KEGG" id="efe:EFER_3995"/>
<dbReference type="HOGENOM" id="CLU_040267_0_0_6"/>
<dbReference type="OrthoDB" id="9803889at2"/>
<dbReference type="Proteomes" id="UP000000745">
    <property type="component" value="Chromosome"/>
</dbReference>
<dbReference type="GO" id="GO:0005737">
    <property type="term" value="C:cytoplasm"/>
    <property type="evidence" value="ECO:0007669"/>
    <property type="project" value="UniProtKB-SubCell"/>
</dbReference>
<dbReference type="GO" id="GO:0005524">
    <property type="term" value="F:ATP binding"/>
    <property type="evidence" value="ECO:0007669"/>
    <property type="project" value="UniProtKB-UniRule"/>
</dbReference>
<dbReference type="GO" id="GO:0003697">
    <property type="term" value="F:single-stranded DNA binding"/>
    <property type="evidence" value="ECO:0007669"/>
    <property type="project" value="UniProtKB-UniRule"/>
</dbReference>
<dbReference type="GO" id="GO:0006260">
    <property type="term" value="P:DNA replication"/>
    <property type="evidence" value="ECO:0007669"/>
    <property type="project" value="UniProtKB-UniRule"/>
</dbReference>
<dbReference type="GO" id="GO:0000731">
    <property type="term" value="P:DNA synthesis involved in DNA repair"/>
    <property type="evidence" value="ECO:0007669"/>
    <property type="project" value="TreeGrafter"/>
</dbReference>
<dbReference type="GO" id="GO:0006302">
    <property type="term" value="P:double-strand break repair"/>
    <property type="evidence" value="ECO:0007669"/>
    <property type="project" value="TreeGrafter"/>
</dbReference>
<dbReference type="GO" id="GO:0009432">
    <property type="term" value="P:SOS response"/>
    <property type="evidence" value="ECO:0007669"/>
    <property type="project" value="UniProtKB-UniRule"/>
</dbReference>
<dbReference type="FunFam" id="1.20.1050.90:FF:000001">
    <property type="entry name" value="DNA replication and repair protein RecF"/>
    <property type="match status" value="1"/>
</dbReference>
<dbReference type="Gene3D" id="3.40.50.300">
    <property type="entry name" value="P-loop containing nucleotide triphosphate hydrolases"/>
    <property type="match status" value="1"/>
</dbReference>
<dbReference type="Gene3D" id="1.20.1050.90">
    <property type="entry name" value="RecF/RecN/SMC, N-terminal domain"/>
    <property type="match status" value="1"/>
</dbReference>
<dbReference type="HAMAP" id="MF_00365">
    <property type="entry name" value="RecF"/>
    <property type="match status" value="1"/>
</dbReference>
<dbReference type="InterPro" id="IPR001238">
    <property type="entry name" value="DNA-binding_RecF"/>
</dbReference>
<dbReference type="InterPro" id="IPR018078">
    <property type="entry name" value="DNA-binding_RecF_CS"/>
</dbReference>
<dbReference type="InterPro" id="IPR027417">
    <property type="entry name" value="P-loop_NTPase"/>
</dbReference>
<dbReference type="InterPro" id="IPR003395">
    <property type="entry name" value="RecF/RecN/SMC_N"/>
</dbReference>
<dbReference type="InterPro" id="IPR042174">
    <property type="entry name" value="RecF_2"/>
</dbReference>
<dbReference type="NCBIfam" id="TIGR00611">
    <property type="entry name" value="recf"/>
    <property type="match status" value="1"/>
</dbReference>
<dbReference type="PANTHER" id="PTHR32182">
    <property type="entry name" value="DNA REPLICATION AND REPAIR PROTEIN RECF"/>
    <property type="match status" value="1"/>
</dbReference>
<dbReference type="PANTHER" id="PTHR32182:SF0">
    <property type="entry name" value="DNA REPLICATION AND REPAIR PROTEIN RECF"/>
    <property type="match status" value="1"/>
</dbReference>
<dbReference type="Pfam" id="PF02463">
    <property type="entry name" value="SMC_N"/>
    <property type="match status" value="1"/>
</dbReference>
<dbReference type="SUPFAM" id="SSF52540">
    <property type="entry name" value="P-loop containing nucleoside triphosphate hydrolases"/>
    <property type="match status" value="1"/>
</dbReference>
<dbReference type="PROSITE" id="PS00617">
    <property type="entry name" value="RECF_1"/>
    <property type="match status" value="1"/>
</dbReference>
<dbReference type="PROSITE" id="PS00618">
    <property type="entry name" value="RECF_2"/>
    <property type="match status" value="1"/>
</dbReference>
<name>RECF_ESCF3</name>
<reference key="1">
    <citation type="journal article" date="2009" name="PLoS Genet.">
        <title>Organised genome dynamics in the Escherichia coli species results in highly diverse adaptive paths.</title>
        <authorList>
            <person name="Touchon M."/>
            <person name="Hoede C."/>
            <person name="Tenaillon O."/>
            <person name="Barbe V."/>
            <person name="Baeriswyl S."/>
            <person name="Bidet P."/>
            <person name="Bingen E."/>
            <person name="Bonacorsi S."/>
            <person name="Bouchier C."/>
            <person name="Bouvet O."/>
            <person name="Calteau A."/>
            <person name="Chiapello H."/>
            <person name="Clermont O."/>
            <person name="Cruveiller S."/>
            <person name="Danchin A."/>
            <person name="Diard M."/>
            <person name="Dossat C."/>
            <person name="Karoui M.E."/>
            <person name="Frapy E."/>
            <person name="Garry L."/>
            <person name="Ghigo J.M."/>
            <person name="Gilles A.M."/>
            <person name="Johnson J."/>
            <person name="Le Bouguenec C."/>
            <person name="Lescat M."/>
            <person name="Mangenot S."/>
            <person name="Martinez-Jehanne V."/>
            <person name="Matic I."/>
            <person name="Nassif X."/>
            <person name="Oztas S."/>
            <person name="Petit M.A."/>
            <person name="Pichon C."/>
            <person name="Rouy Z."/>
            <person name="Ruf C.S."/>
            <person name="Schneider D."/>
            <person name="Tourret J."/>
            <person name="Vacherie B."/>
            <person name="Vallenet D."/>
            <person name="Medigue C."/>
            <person name="Rocha E.P.C."/>
            <person name="Denamur E."/>
        </authorList>
    </citation>
    <scope>NUCLEOTIDE SEQUENCE [LARGE SCALE GENOMIC DNA]</scope>
    <source>
        <strain>ATCC 35469 / DSM 13698 / BCRC 15582 / CCUG 18766 / IAM 14443 / JCM 21226 / LMG 7866 / NBRC 102419 / NCTC 12128 / CDC 0568-73</strain>
    </source>
</reference>
<keyword id="KW-0067">ATP-binding</keyword>
<keyword id="KW-0963">Cytoplasm</keyword>
<keyword id="KW-0227">DNA damage</keyword>
<keyword id="KW-0234">DNA repair</keyword>
<keyword id="KW-0235">DNA replication</keyword>
<keyword id="KW-0238">DNA-binding</keyword>
<keyword id="KW-0547">Nucleotide-binding</keyword>
<keyword id="KW-0742">SOS response</keyword>
<gene>
    <name evidence="1" type="primary">recF</name>
    <name type="ordered locus">EFER_3995</name>
</gene>